<gene>
    <name evidence="1" type="primary">MT-ATP6</name>
    <name type="synonym">ATP6</name>
    <name type="synonym">ATPASE6</name>
    <name type="synonym">MTATP6</name>
</gene>
<reference key="1">
    <citation type="journal article" date="1998" name="Mol. Phylogenet. Evol.">
        <title>The complete nucleotide sequence of the domestic dog (Canis familiaris) mitochondrial genome.</title>
        <authorList>
            <person name="Kim K.S."/>
            <person name="Lee S.E."/>
            <person name="Jeong H.W."/>
            <person name="Ha J.H."/>
        </authorList>
    </citation>
    <scope>NUCLEOTIDE SEQUENCE [GENOMIC DNA]</scope>
    <source>
        <strain evidence="4">Boxer</strain>
    </source>
</reference>
<reference key="2">
    <citation type="submission" date="2004-08" db="EMBL/GenBank/DDBJ databases">
        <title>The complete mitochondrial DNA sequence of the Beagle dog (Canis familiaris).</title>
        <authorList>
            <person name="Zhu S."/>
            <person name="Xu Q."/>
            <person name="Chang H."/>
        </authorList>
    </citation>
    <scope>NUCLEOTIDE SEQUENCE [GENOMIC DNA]</scope>
    <source>
        <strain>Beagle</strain>
    </source>
</reference>
<protein>
    <recommendedName>
        <fullName evidence="1">ATP synthase F(0) complex subunit a</fullName>
    </recommendedName>
    <alternativeName>
        <fullName>F-ATPase protein 6</fullName>
    </alternativeName>
    <alternativeName>
        <fullName evidence="1">Proton-conducting channel, ATP synthase F(0) complex subunit a</fullName>
    </alternativeName>
</protein>
<organism>
    <name type="scientific">Canis lupus familiaris</name>
    <name type="common">Dog</name>
    <name type="synonym">Canis familiaris</name>
    <dbReference type="NCBI Taxonomy" id="9615"/>
    <lineage>
        <taxon>Eukaryota</taxon>
        <taxon>Metazoa</taxon>
        <taxon>Chordata</taxon>
        <taxon>Craniata</taxon>
        <taxon>Vertebrata</taxon>
        <taxon>Euteleostomi</taxon>
        <taxon>Mammalia</taxon>
        <taxon>Eutheria</taxon>
        <taxon>Laurasiatheria</taxon>
        <taxon>Carnivora</taxon>
        <taxon>Caniformia</taxon>
        <taxon>Canidae</taxon>
        <taxon>Canis</taxon>
    </lineage>
</organism>
<name>ATP6_CANLF</name>
<proteinExistence type="inferred from homology"/>
<accession>Q9ZZ62</accession>
<accession>Q66QB6</accession>
<sequence length="226" mass="24789">MNENLFASFAAPSMMGLPIVVLIVMFPSILFPTPSRLINNRLISIQQWLIQLTSKQMLAIHNQKGRTWALMLMSLILFIGSTNLLGLLPHSFTPTTQLSMNLGMAIPLWAGTVITGFRYKTKASLAHFLPQGTPLPLIPMLVVIETISLFIQPMALAVRLTANITAGHLLIHLIGGATLALINISATTAFITFIILILLTILEFAVALIQAYVFTLLVSLYLHDNT</sequence>
<feature type="chain" id="PRO_0000082102" description="ATP synthase F(0) complex subunit a">
    <location>
        <begin position="1"/>
        <end position="226"/>
    </location>
</feature>
<feature type="transmembrane region" description="Helical" evidence="2">
    <location>
        <begin position="11"/>
        <end position="31"/>
    </location>
</feature>
<feature type="transmembrane region" description="Helical" evidence="2">
    <location>
        <begin position="68"/>
        <end position="88"/>
    </location>
</feature>
<feature type="transmembrane region" description="Helical" evidence="2">
    <location>
        <begin position="97"/>
        <end position="117"/>
    </location>
</feature>
<feature type="transmembrane region" description="Helical" evidence="2">
    <location>
        <begin position="138"/>
        <end position="158"/>
    </location>
</feature>
<feature type="transmembrane region" description="Helical" evidence="2">
    <location>
        <begin position="164"/>
        <end position="184"/>
    </location>
</feature>
<feature type="transmembrane region" description="Helical" evidence="2">
    <location>
        <begin position="189"/>
        <end position="209"/>
    </location>
</feature>
<feature type="sequence conflict" description="In Ref. 2; AAU12161." evidence="3" ref="2">
    <original>M</original>
    <variation>I</variation>
    <location>
        <position position="73"/>
    </location>
</feature>
<comment type="function">
    <text evidence="1">Subunit a, of the mitochondrial membrane ATP synthase complex (F(1)F(0) ATP synthase or Complex V) that produces ATP from ADP in the presence of a proton gradient across the membrane which is generated by electron transport complexes of the respiratory chain. ATP synthase complex consist of a soluble F(1) head domain - the catalytic core - and a membrane F(1) domain - the membrane proton channel. These two domains are linked by a central stalk rotating inside the F(1) region and a stationary peripheral stalk. During catalysis, ATP synthesis in the catalytic domain of F(1) is coupled via a rotary mechanism of the central stalk subunits to proton translocation. With the subunit c (ATP5MC1), forms the proton-conducting channel in the F(0) domain, that contains two crucial half-channels (inlet and outlet) that facilitate proton movement from the mitochondrial intermembrane space (IMS) into the matrix. Protons are taken up via the inlet half-channel and released through the outlet half-channel, following a Grotthuss mechanism.</text>
</comment>
<comment type="catalytic activity">
    <reaction evidence="1">
        <text>H(+)(in) = H(+)(out)</text>
        <dbReference type="Rhea" id="RHEA:34979"/>
        <dbReference type="ChEBI" id="CHEBI:15378"/>
    </reaction>
</comment>
<comment type="subunit">
    <text evidence="1">Component of the ATP synthase complex composed at least of ATP5F1A/subunit alpha, ATP5F1B/subunit beta, ATP5MC1/subunit c (homooctomer), MT-ATP6/subunit a, MT-ATP8/subunit 8, ATP5ME/subunit e, ATP5MF/subunit f, ATP5MG/subunit g, ATP5MK/subunit k, ATP5MJ/subunit j, ATP5F1C/subunit gamma, ATP5F1D/subunit delta, ATP5F1E/subunit epsilon, ATP5PF/subunit F6, ATP5PB/subunit b, ATP5PD/subunit d, ATP5PO/subunit OSCP. ATP synthase complex consists of a soluble F(1) head domain (subunits alpha(3) and beta(3)) - the catalytic core - and a membrane F(0) domain - the membrane proton channel (subunits c, a, 8, e, f, g, k and j). These two domains are linked by a central stalk (subunits gamma, delta, and epsilon) rotating inside the F1 region and a stationary peripheral stalk (subunits F6, b, d, and OSCP). Interacts with DNAJC30; interaction is direct.</text>
</comment>
<comment type="subcellular location">
    <subcellularLocation>
        <location>Mitochondrion inner membrane</location>
        <topology>Multi-pass membrane protein</topology>
    </subcellularLocation>
</comment>
<comment type="similarity">
    <text evidence="3">Belongs to the ATPase A chain family.</text>
</comment>
<geneLocation type="mitochondrion"/>
<keyword id="KW-0066">ATP synthesis</keyword>
<keyword id="KW-0138">CF(0)</keyword>
<keyword id="KW-0375">Hydrogen ion transport</keyword>
<keyword id="KW-0406">Ion transport</keyword>
<keyword id="KW-0472">Membrane</keyword>
<keyword id="KW-0496">Mitochondrion</keyword>
<keyword id="KW-0999">Mitochondrion inner membrane</keyword>
<keyword id="KW-1185">Reference proteome</keyword>
<keyword id="KW-0812">Transmembrane</keyword>
<keyword id="KW-1133">Transmembrane helix</keyword>
<keyword id="KW-0813">Transport</keyword>
<dbReference type="EMBL" id="U96639">
    <property type="protein sequence ID" value="AAD04768.1"/>
    <property type="molecule type" value="Genomic_DNA"/>
</dbReference>
<dbReference type="EMBL" id="AY729880">
    <property type="protein sequence ID" value="AAU12161.1"/>
    <property type="molecule type" value="Genomic_DNA"/>
</dbReference>
<dbReference type="PIR" id="T11498">
    <property type="entry name" value="T11498"/>
</dbReference>
<dbReference type="RefSeq" id="NP_008476.1">
    <property type="nucleotide sequence ID" value="NC_002008.4"/>
</dbReference>
<dbReference type="SMR" id="Q9ZZ62"/>
<dbReference type="FunCoup" id="Q9ZZ62">
    <property type="interactions" value="23"/>
</dbReference>
<dbReference type="STRING" id="9615.ENSCAFP00000030314"/>
<dbReference type="PaxDb" id="9612-ENSCAFP00000030314"/>
<dbReference type="GeneID" id="804488"/>
<dbReference type="KEGG" id="cfa:804488"/>
<dbReference type="CTD" id="4508"/>
<dbReference type="eggNOG" id="KOG4665">
    <property type="taxonomic scope" value="Eukaryota"/>
</dbReference>
<dbReference type="HOGENOM" id="CLU_041018_0_2_1"/>
<dbReference type="InParanoid" id="Q9ZZ62"/>
<dbReference type="OMA" id="FFDQFMS"/>
<dbReference type="TreeFam" id="TF343395"/>
<dbReference type="Proteomes" id="UP000002254">
    <property type="component" value="Mitochondrion"/>
</dbReference>
<dbReference type="Proteomes" id="UP000694429">
    <property type="component" value="Unplaced"/>
</dbReference>
<dbReference type="Proteomes" id="UP000694542">
    <property type="component" value="Unassembled WGS sequence"/>
</dbReference>
<dbReference type="Proteomes" id="UP000805418">
    <property type="component" value="Mitochondrion MT"/>
</dbReference>
<dbReference type="Bgee" id="ENSCAFG00000022729">
    <property type="expression patterns" value="Expressed in jejunum and 47 other cell types or tissues"/>
</dbReference>
<dbReference type="GO" id="GO:0005743">
    <property type="term" value="C:mitochondrial inner membrane"/>
    <property type="evidence" value="ECO:0007669"/>
    <property type="project" value="UniProtKB-SubCell"/>
</dbReference>
<dbReference type="GO" id="GO:0045259">
    <property type="term" value="C:proton-transporting ATP synthase complex"/>
    <property type="evidence" value="ECO:0000250"/>
    <property type="project" value="UniProtKB"/>
</dbReference>
<dbReference type="GO" id="GO:0015252">
    <property type="term" value="F:proton channel activity"/>
    <property type="evidence" value="ECO:0000250"/>
    <property type="project" value="UniProtKB"/>
</dbReference>
<dbReference type="GO" id="GO:0015986">
    <property type="term" value="P:proton motive force-driven ATP synthesis"/>
    <property type="evidence" value="ECO:0000250"/>
    <property type="project" value="UniProtKB"/>
</dbReference>
<dbReference type="GO" id="GO:1902600">
    <property type="term" value="P:proton transmembrane transport"/>
    <property type="evidence" value="ECO:0000250"/>
    <property type="project" value="UniProtKB"/>
</dbReference>
<dbReference type="CDD" id="cd00310">
    <property type="entry name" value="ATP-synt_Fo_a_6"/>
    <property type="match status" value="1"/>
</dbReference>
<dbReference type="FunFam" id="1.20.120.220:FF:000004">
    <property type="entry name" value="ATP synthase subunit a"/>
    <property type="match status" value="1"/>
</dbReference>
<dbReference type="Gene3D" id="1.20.120.220">
    <property type="entry name" value="ATP synthase, F0 complex, subunit A"/>
    <property type="match status" value="1"/>
</dbReference>
<dbReference type="InterPro" id="IPR000568">
    <property type="entry name" value="ATP_synth_F0_asu"/>
</dbReference>
<dbReference type="InterPro" id="IPR023011">
    <property type="entry name" value="ATP_synth_F0_asu_AS"/>
</dbReference>
<dbReference type="InterPro" id="IPR045083">
    <property type="entry name" value="ATP_synth_F0_asu_bact/mt"/>
</dbReference>
<dbReference type="InterPro" id="IPR035908">
    <property type="entry name" value="F0_ATP_A_sf"/>
</dbReference>
<dbReference type="NCBIfam" id="TIGR01131">
    <property type="entry name" value="ATP_synt_6_or_A"/>
    <property type="match status" value="1"/>
</dbReference>
<dbReference type="PANTHER" id="PTHR11410">
    <property type="entry name" value="ATP SYNTHASE SUBUNIT A"/>
    <property type="match status" value="1"/>
</dbReference>
<dbReference type="PANTHER" id="PTHR11410:SF0">
    <property type="entry name" value="ATP SYNTHASE SUBUNIT A"/>
    <property type="match status" value="1"/>
</dbReference>
<dbReference type="Pfam" id="PF00119">
    <property type="entry name" value="ATP-synt_A"/>
    <property type="match status" value="1"/>
</dbReference>
<dbReference type="PRINTS" id="PR00123">
    <property type="entry name" value="ATPASEA"/>
</dbReference>
<dbReference type="SUPFAM" id="SSF81336">
    <property type="entry name" value="F1F0 ATP synthase subunit A"/>
    <property type="match status" value="1"/>
</dbReference>
<dbReference type="PROSITE" id="PS00449">
    <property type="entry name" value="ATPASE_A"/>
    <property type="match status" value="1"/>
</dbReference>
<evidence type="ECO:0000250" key="1">
    <source>
        <dbReference type="UniProtKB" id="P00846"/>
    </source>
</evidence>
<evidence type="ECO:0000255" key="2"/>
<evidence type="ECO:0000305" key="3"/>
<evidence type="ECO:0000312" key="4">
    <source>
        <dbReference type="Proteomes" id="UP000002254"/>
    </source>
</evidence>